<reference key="1">
    <citation type="journal article" date="2000" name="Science">
        <title>The genome sequence of Drosophila melanogaster.</title>
        <authorList>
            <person name="Adams M.D."/>
            <person name="Celniker S.E."/>
            <person name="Holt R.A."/>
            <person name="Evans C.A."/>
            <person name="Gocayne J.D."/>
            <person name="Amanatides P.G."/>
            <person name="Scherer S.E."/>
            <person name="Li P.W."/>
            <person name="Hoskins R.A."/>
            <person name="Galle R.F."/>
            <person name="George R.A."/>
            <person name="Lewis S.E."/>
            <person name="Richards S."/>
            <person name="Ashburner M."/>
            <person name="Henderson S.N."/>
            <person name="Sutton G.G."/>
            <person name="Wortman J.R."/>
            <person name="Yandell M.D."/>
            <person name="Zhang Q."/>
            <person name="Chen L.X."/>
            <person name="Brandon R.C."/>
            <person name="Rogers Y.-H.C."/>
            <person name="Blazej R.G."/>
            <person name="Champe M."/>
            <person name="Pfeiffer B.D."/>
            <person name="Wan K.H."/>
            <person name="Doyle C."/>
            <person name="Baxter E.G."/>
            <person name="Helt G."/>
            <person name="Nelson C.R."/>
            <person name="Miklos G.L.G."/>
            <person name="Abril J.F."/>
            <person name="Agbayani A."/>
            <person name="An H.-J."/>
            <person name="Andrews-Pfannkoch C."/>
            <person name="Baldwin D."/>
            <person name="Ballew R.M."/>
            <person name="Basu A."/>
            <person name="Baxendale J."/>
            <person name="Bayraktaroglu L."/>
            <person name="Beasley E.M."/>
            <person name="Beeson K.Y."/>
            <person name="Benos P.V."/>
            <person name="Berman B.P."/>
            <person name="Bhandari D."/>
            <person name="Bolshakov S."/>
            <person name="Borkova D."/>
            <person name="Botchan M.R."/>
            <person name="Bouck J."/>
            <person name="Brokstein P."/>
            <person name="Brottier P."/>
            <person name="Burtis K.C."/>
            <person name="Busam D.A."/>
            <person name="Butler H."/>
            <person name="Cadieu E."/>
            <person name="Center A."/>
            <person name="Chandra I."/>
            <person name="Cherry J.M."/>
            <person name="Cawley S."/>
            <person name="Dahlke C."/>
            <person name="Davenport L.B."/>
            <person name="Davies P."/>
            <person name="de Pablos B."/>
            <person name="Delcher A."/>
            <person name="Deng Z."/>
            <person name="Mays A.D."/>
            <person name="Dew I."/>
            <person name="Dietz S.M."/>
            <person name="Dodson K."/>
            <person name="Doup L.E."/>
            <person name="Downes M."/>
            <person name="Dugan-Rocha S."/>
            <person name="Dunkov B.C."/>
            <person name="Dunn P."/>
            <person name="Durbin K.J."/>
            <person name="Evangelista C.C."/>
            <person name="Ferraz C."/>
            <person name="Ferriera S."/>
            <person name="Fleischmann W."/>
            <person name="Fosler C."/>
            <person name="Gabrielian A.E."/>
            <person name="Garg N.S."/>
            <person name="Gelbart W.M."/>
            <person name="Glasser K."/>
            <person name="Glodek A."/>
            <person name="Gong F."/>
            <person name="Gorrell J.H."/>
            <person name="Gu Z."/>
            <person name="Guan P."/>
            <person name="Harris M."/>
            <person name="Harris N.L."/>
            <person name="Harvey D.A."/>
            <person name="Heiman T.J."/>
            <person name="Hernandez J.R."/>
            <person name="Houck J."/>
            <person name="Hostin D."/>
            <person name="Houston K.A."/>
            <person name="Howland T.J."/>
            <person name="Wei M.-H."/>
            <person name="Ibegwam C."/>
            <person name="Jalali M."/>
            <person name="Kalush F."/>
            <person name="Karpen G.H."/>
            <person name="Ke Z."/>
            <person name="Kennison J.A."/>
            <person name="Ketchum K.A."/>
            <person name="Kimmel B.E."/>
            <person name="Kodira C.D."/>
            <person name="Kraft C.L."/>
            <person name="Kravitz S."/>
            <person name="Kulp D."/>
            <person name="Lai Z."/>
            <person name="Lasko P."/>
            <person name="Lei Y."/>
            <person name="Levitsky A.A."/>
            <person name="Li J.H."/>
            <person name="Li Z."/>
            <person name="Liang Y."/>
            <person name="Lin X."/>
            <person name="Liu X."/>
            <person name="Mattei B."/>
            <person name="McIntosh T.C."/>
            <person name="McLeod M.P."/>
            <person name="McPherson D."/>
            <person name="Merkulov G."/>
            <person name="Milshina N.V."/>
            <person name="Mobarry C."/>
            <person name="Morris J."/>
            <person name="Moshrefi A."/>
            <person name="Mount S.M."/>
            <person name="Moy M."/>
            <person name="Murphy B."/>
            <person name="Murphy L."/>
            <person name="Muzny D.M."/>
            <person name="Nelson D.L."/>
            <person name="Nelson D.R."/>
            <person name="Nelson K.A."/>
            <person name="Nixon K."/>
            <person name="Nusskern D.R."/>
            <person name="Pacleb J.M."/>
            <person name="Palazzolo M."/>
            <person name="Pittman G.S."/>
            <person name="Pan S."/>
            <person name="Pollard J."/>
            <person name="Puri V."/>
            <person name="Reese M.G."/>
            <person name="Reinert K."/>
            <person name="Remington K."/>
            <person name="Saunders R.D.C."/>
            <person name="Scheeler F."/>
            <person name="Shen H."/>
            <person name="Shue B.C."/>
            <person name="Siden-Kiamos I."/>
            <person name="Simpson M."/>
            <person name="Skupski M.P."/>
            <person name="Smith T.J."/>
            <person name="Spier E."/>
            <person name="Spradling A.C."/>
            <person name="Stapleton M."/>
            <person name="Strong R."/>
            <person name="Sun E."/>
            <person name="Svirskas R."/>
            <person name="Tector C."/>
            <person name="Turner R."/>
            <person name="Venter E."/>
            <person name="Wang A.H."/>
            <person name="Wang X."/>
            <person name="Wang Z.-Y."/>
            <person name="Wassarman D.A."/>
            <person name="Weinstock G.M."/>
            <person name="Weissenbach J."/>
            <person name="Williams S.M."/>
            <person name="Woodage T."/>
            <person name="Worley K.C."/>
            <person name="Wu D."/>
            <person name="Yang S."/>
            <person name="Yao Q.A."/>
            <person name="Ye J."/>
            <person name="Yeh R.-F."/>
            <person name="Zaveri J.S."/>
            <person name="Zhan M."/>
            <person name="Zhang G."/>
            <person name="Zhao Q."/>
            <person name="Zheng L."/>
            <person name="Zheng X.H."/>
            <person name="Zhong F.N."/>
            <person name="Zhong W."/>
            <person name="Zhou X."/>
            <person name="Zhu S.C."/>
            <person name="Zhu X."/>
            <person name="Smith H.O."/>
            <person name="Gibbs R.A."/>
            <person name="Myers E.W."/>
            <person name="Rubin G.M."/>
            <person name="Venter J.C."/>
        </authorList>
    </citation>
    <scope>NUCLEOTIDE SEQUENCE [LARGE SCALE GENOMIC DNA]</scope>
    <source>
        <strain>Berkeley</strain>
    </source>
</reference>
<reference key="2">
    <citation type="journal article" date="2002" name="Genome Biol.">
        <title>Annotation of the Drosophila melanogaster euchromatic genome: a systematic review.</title>
        <authorList>
            <person name="Misra S."/>
            <person name="Crosby M.A."/>
            <person name="Mungall C.J."/>
            <person name="Matthews B.B."/>
            <person name="Campbell K.S."/>
            <person name="Hradecky P."/>
            <person name="Huang Y."/>
            <person name="Kaminker J.S."/>
            <person name="Millburn G.H."/>
            <person name="Prochnik S.E."/>
            <person name="Smith C.D."/>
            <person name="Tupy J.L."/>
            <person name="Whitfield E.J."/>
            <person name="Bayraktaroglu L."/>
            <person name="Berman B.P."/>
            <person name="Bettencourt B.R."/>
            <person name="Celniker S.E."/>
            <person name="de Grey A.D.N.J."/>
            <person name="Drysdale R.A."/>
            <person name="Harris N.L."/>
            <person name="Richter J."/>
            <person name="Russo S."/>
            <person name="Schroeder A.J."/>
            <person name="Shu S.Q."/>
            <person name="Stapleton M."/>
            <person name="Yamada C."/>
            <person name="Ashburner M."/>
            <person name="Gelbart W.M."/>
            <person name="Rubin G.M."/>
            <person name="Lewis S.E."/>
        </authorList>
    </citation>
    <scope>GENOME REANNOTATION</scope>
    <source>
        <strain>Berkeley</strain>
    </source>
</reference>
<reference key="3">
    <citation type="journal article" date="2002" name="Genome Biol.">
        <title>A Drosophila full-length cDNA resource.</title>
        <authorList>
            <person name="Stapleton M."/>
            <person name="Carlson J.W."/>
            <person name="Brokstein P."/>
            <person name="Yu C."/>
            <person name="Champe M."/>
            <person name="George R.A."/>
            <person name="Guarin H."/>
            <person name="Kronmiller B."/>
            <person name="Pacleb J.M."/>
            <person name="Park S."/>
            <person name="Wan K.H."/>
            <person name="Rubin G.M."/>
            <person name="Celniker S.E."/>
        </authorList>
    </citation>
    <scope>NUCLEOTIDE SEQUENCE [LARGE SCALE MRNA]</scope>
    <source>
        <strain>Berkeley</strain>
        <tissue>Embryo</tissue>
    </source>
</reference>
<reference key="4">
    <citation type="submission" date="2008-12" db="EMBL/GenBank/DDBJ databases">
        <authorList>
            <person name="Carlson J.W."/>
            <person name="Booth B."/>
            <person name="Frise E."/>
            <person name="Park S."/>
            <person name="Wan K.H."/>
            <person name="Yu C."/>
            <person name="Celniker S.E."/>
        </authorList>
    </citation>
    <scope>NUCLEOTIDE SEQUENCE [LARGE SCALE MRNA]</scope>
    <source>
        <strain>Berkeley</strain>
    </source>
</reference>
<reference key="5">
    <citation type="submission" date="1993-11" db="EMBL/GenBank/DDBJ databases">
        <authorList>
            <person name="Edgar B."/>
        </authorList>
    </citation>
    <scope>NUCLEOTIDE SEQUENCE [GENOMIC DNA] OF 5-117</scope>
    <source>
        <strain>Sevelin</strain>
        <tissue>Embryo</tissue>
    </source>
</reference>
<reference key="6">
    <citation type="journal article" date="2013" name="Nature">
        <title>Structures of the human and Drosophila 80S ribosome.</title>
        <authorList>
            <person name="Anger A.M."/>
            <person name="Armache J.P."/>
            <person name="Berninghausen O."/>
            <person name="Habeck M."/>
            <person name="Subklewe M."/>
            <person name="Wilson D.N."/>
            <person name="Beckmann R."/>
        </authorList>
    </citation>
    <scope>STRUCTURE BY ELECTRON MICROSCOPY (6.0 ANGSTROMS) OF THE 80S RIBOSOME</scope>
</reference>
<keyword id="KW-0002">3D-structure</keyword>
<keyword id="KW-1185">Reference proteome</keyword>
<keyword id="KW-0687">Ribonucleoprotein</keyword>
<keyword id="KW-0689">Ribosomal protein</keyword>
<dbReference type="EMBL" id="AE014297">
    <property type="protein sequence ID" value="AAN13495.1"/>
    <property type="molecule type" value="Genomic_DNA"/>
</dbReference>
<dbReference type="EMBL" id="AY071076">
    <property type="protein sequence ID" value="AAL48698.1"/>
    <property type="molecule type" value="mRNA"/>
</dbReference>
<dbReference type="EMBL" id="BT050549">
    <property type="protein sequence ID" value="ACJ13256.1"/>
    <property type="molecule type" value="mRNA"/>
</dbReference>
<dbReference type="EMBL" id="U03289">
    <property type="protein sequence ID" value="AAA03464.1"/>
    <property type="molecule type" value="Unassigned_DNA"/>
</dbReference>
<dbReference type="RefSeq" id="NP_524315.2">
    <property type="nucleotide sequence ID" value="NM_079591.6"/>
</dbReference>
<dbReference type="RefSeq" id="NP_731544.1">
    <property type="nucleotide sequence ID" value="NM_169376.3"/>
</dbReference>
<dbReference type="PDB" id="4V6W">
    <property type="method" value="EM"/>
    <property type="resolution" value="6.00 A"/>
    <property type="chains" value="AZ=1-117"/>
</dbReference>
<dbReference type="PDB" id="6XU6">
    <property type="method" value="EM"/>
    <property type="resolution" value="3.50 A"/>
    <property type="chains" value="AZ=40-113"/>
</dbReference>
<dbReference type="PDB" id="6XU7">
    <property type="method" value="EM"/>
    <property type="resolution" value="4.90 A"/>
    <property type="chains" value="AZ=40-113"/>
</dbReference>
<dbReference type="PDB" id="6XU8">
    <property type="method" value="EM"/>
    <property type="resolution" value="3.00 A"/>
    <property type="chains" value="AZ=40-113"/>
</dbReference>
<dbReference type="PDBsum" id="4V6W"/>
<dbReference type="PDBsum" id="6XU6"/>
<dbReference type="PDBsum" id="6XU7"/>
<dbReference type="PDBsum" id="6XU8"/>
<dbReference type="EMDB" id="EMD-10622"/>
<dbReference type="EMDB" id="EMD-10623"/>
<dbReference type="EMDB" id="EMD-10624"/>
<dbReference type="SMR" id="P48588"/>
<dbReference type="BioGRID" id="66477">
    <property type="interactions" value="107"/>
</dbReference>
<dbReference type="DIP" id="DIP-17632N"/>
<dbReference type="FunCoup" id="P48588">
    <property type="interactions" value="1441"/>
</dbReference>
<dbReference type="IntAct" id="P48588">
    <property type="interactions" value="15"/>
</dbReference>
<dbReference type="STRING" id="7227.FBpp0081845"/>
<dbReference type="PaxDb" id="7227-FBpp0081845"/>
<dbReference type="DNASU" id="41343"/>
<dbReference type="EnsemblMetazoa" id="FBtr0082369">
    <property type="protein sequence ID" value="FBpp0081845"/>
    <property type="gene ID" value="FBgn0086472"/>
</dbReference>
<dbReference type="EnsemblMetazoa" id="FBtr0082370">
    <property type="protein sequence ID" value="FBpp0081846"/>
    <property type="gene ID" value="FBgn0086472"/>
</dbReference>
<dbReference type="GeneID" id="41343"/>
<dbReference type="KEGG" id="dme:Dmel_CG6684"/>
<dbReference type="AGR" id="FB:FBgn0086472"/>
<dbReference type="CTD" id="6230"/>
<dbReference type="FlyBase" id="FBgn0086472">
    <property type="gene designation" value="RpS25"/>
</dbReference>
<dbReference type="VEuPathDB" id="VectorBase:FBgn0086472"/>
<dbReference type="eggNOG" id="KOG1767">
    <property type="taxonomic scope" value="Eukaryota"/>
</dbReference>
<dbReference type="GeneTree" id="ENSGT00390000004856"/>
<dbReference type="HOGENOM" id="CLU_129470_0_1_1"/>
<dbReference type="InParanoid" id="P48588"/>
<dbReference type="OMA" id="RIVHHSG"/>
<dbReference type="OrthoDB" id="10263513at2759"/>
<dbReference type="PhylomeDB" id="P48588"/>
<dbReference type="Reactome" id="R-DME-156827">
    <property type="pathway name" value="L13a-mediated translational silencing of Ceruloplasmin expression"/>
</dbReference>
<dbReference type="Reactome" id="R-DME-1799339">
    <property type="pathway name" value="SRP-dependent cotranslational protein targeting to membrane"/>
</dbReference>
<dbReference type="Reactome" id="R-DME-72649">
    <property type="pathway name" value="Translation initiation complex formation"/>
</dbReference>
<dbReference type="Reactome" id="R-DME-72689">
    <property type="pathway name" value="Formation of a pool of free 40S subunits"/>
</dbReference>
<dbReference type="Reactome" id="R-DME-72695">
    <property type="pathway name" value="Formation of the ternary complex, and subsequently, the 43S complex"/>
</dbReference>
<dbReference type="Reactome" id="R-DME-72702">
    <property type="pathway name" value="Ribosomal scanning and start codon recognition"/>
</dbReference>
<dbReference type="Reactome" id="R-DME-72706">
    <property type="pathway name" value="GTP hydrolysis and joining of the 60S ribosomal subunit"/>
</dbReference>
<dbReference type="Reactome" id="R-DME-975956">
    <property type="pathway name" value="Nonsense Mediated Decay (NMD) independent of the Exon Junction Complex (EJC)"/>
</dbReference>
<dbReference type="Reactome" id="R-DME-975957">
    <property type="pathway name" value="Nonsense Mediated Decay (NMD) enhanced by the Exon Junction Complex (EJC)"/>
</dbReference>
<dbReference type="BioGRID-ORCS" id="41343">
    <property type="hits" value="1 hit in 1 CRISPR screen"/>
</dbReference>
<dbReference type="ChiTaRS" id="RpS25">
    <property type="organism name" value="fly"/>
</dbReference>
<dbReference type="GenomeRNAi" id="41343"/>
<dbReference type="PRO" id="PR:P48588"/>
<dbReference type="Proteomes" id="UP000000803">
    <property type="component" value="Chromosome 3R"/>
</dbReference>
<dbReference type="Bgee" id="FBgn0086472">
    <property type="expression patterns" value="Expressed in eye disc (Drosophila) and 292 other cell types or tissues"/>
</dbReference>
<dbReference type="ExpressionAtlas" id="P48588">
    <property type="expression patterns" value="baseline and differential"/>
</dbReference>
<dbReference type="GO" id="GO:0022626">
    <property type="term" value="C:cytosolic ribosome"/>
    <property type="evidence" value="ECO:0000314"/>
    <property type="project" value="FlyBase"/>
</dbReference>
<dbReference type="GO" id="GO:0022627">
    <property type="term" value="C:cytosolic small ribosomal subunit"/>
    <property type="evidence" value="ECO:0000318"/>
    <property type="project" value="GO_Central"/>
</dbReference>
<dbReference type="GO" id="GO:0003735">
    <property type="term" value="F:structural constituent of ribosome"/>
    <property type="evidence" value="ECO:0000314"/>
    <property type="project" value="FlyBase"/>
</dbReference>
<dbReference type="GO" id="GO:0002181">
    <property type="term" value="P:cytoplasmic translation"/>
    <property type="evidence" value="ECO:0000304"/>
    <property type="project" value="FlyBase"/>
</dbReference>
<dbReference type="FunFam" id="1.10.10.10:FF:000166">
    <property type="entry name" value="40S ribosomal protein S25"/>
    <property type="match status" value="1"/>
</dbReference>
<dbReference type="FunFam" id="3.30.63.20:FF:000001">
    <property type="entry name" value="40S ribosomal protein S25"/>
    <property type="match status" value="1"/>
</dbReference>
<dbReference type="Gene3D" id="3.30.63.20">
    <property type="match status" value="1"/>
</dbReference>
<dbReference type="InterPro" id="IPR004977">
    <property type="entry name" value="Ribosomal_eS25"/>
</dbReference>
<dbReference type="PANTHER" id="PTHR12850">
    <property type="entry name" value="40S RIBOSOMAL PROTEIN S25"/>
    <property type="match status" value="1"/>
</dbReference>
<dbReference type="Pfam" id="PF03297">
    <property type="entry name" value="Ribosomal_S25"/>
    <property type="match status" value="1"/>
</dbReference>
<gene>
    <name type="primary">RpS25</name>
    <name type="synonym">RpS31</name>
    <name type="ORF">CG6684</name>
</gene>
<proteinExistence type="evidence at protein level"/>
<evidence type="ECO:0000256" key="1">
    <source>
        <dbReference type="SAM" id="MobiDB-lite"/>
    </source>
</evidence>
<evidence type="ECO:0000305" key="2"/>
<sequence length="117" mass="13201">MPPKKDAKSSAKQPQKTQKKKEGSGGGKAKKKKWSKGKVRDKLNNQVLFDKATYEKLYKEVPAYKLITPSVVSERLKIRGSLAKRALIELREKGLIKQVVQHHSQVIYTRATKGDEA</sequence>
<accession>P48588</accession>
<accession>B6IDV9</accession>
<accession>Q0KI84</accession>
<accession>Q8SZ71</accession>
<accession>Q9VGS0</accession>
<comment type="similarity">
    <text evidence="2">Belongs to the eukaryotic ribosomal protein eS25 family.</text>
</comment>
<protein>
    <recommendedName>
        <fullName evidence="2">Small ribosomal subunit protein eS25</fullName>
    </recommendedName>
    <alternativeName>
        <fullName>40S ribosomal protein S25</fullName>
    </alternativeName>
</protein>
<name>RS25_DROME</name>
<organism>
    <name type="scientific">Drosophila melanogaster</name>
    <name type="common">Fruit fly</name>
    <dbReference type="NCBI Taxonomy" id="7227"/>
    <lineage>
        <taxon>Eukaryota</taxon>
        <taxon>Metazoa</taxon>
        <taxon>Ecdysozoa</taxon>
        <taxon>Arthropoda</taxon>
        <taxon>Hexapoda</taxon>
        <taxon>Insecta</taxon>
        <taxon>Pterygota</taxon>
        <taxon>Neoptera</taxon>
        <taxon>Endopterygota</taxon>
        <taxon>Diptera</taxon>
        <taxon>Brachycera</taxon>
        <taxon>Muscomorpha</taxon>
        <taxon>Ephydroidea</taxon>
        <taxon>Drosophilidae</taxon>
        <taxon>Drosophila</taxon>
        <taxon>Sophophora</taxon>
    </lineage>
</organism>
<feature type="chain" id="PRO_0000192877" description="Small ribosomal subunit protein eS25">
    <location>
        <begin position="1"/>
        <end position="117"/>
    </location>
</feature>
<feature type="region of interest" description="Disordered" evidence="1">
    <location>
        <begin position="1"/>
        <end position="38"/>
    </location>
</feature>
<feature type="compositionally biased region" description="Basic residues" evidence="1">
    <location>
        <begin position="28"/>
        <end position="37"/>
    </location>
</feature>
<feature type="sequence conflict" description="In Ref. 5; AAA03464." evidence="2" ref="5">
    <original>A</original>
    <variation>D</variation>
    <location>
        <position position="83"/>
    </location>
</feature>